<keyword id="KW-0028">Amino-acid biosynthesis</keyword>
<keyword id="KW-0057">Aromatic amino acid biosynthesis</keyword>
<keyword id="KW-0456">Lyase</keyword>
<keyword id="KW-0822">Tryptophan biosynthesis</keyword>
<feature type="chain" id="PRO_1000018257" description="Tryptophan synthase alpha chain">
    <location>
        <begin position="1"/>
        <end position="269"/>
    </location>
</feature>
<feature type="active site" description="Proton acceptor" evidence="1">
    <location>
        <position position="49"/>
    </location>
</feature>
<feature type="active site" description="Proton acceptor" evidence="1">
    <location>
        <position position="60"/>
    </location>
</feature>
<evidence type="ECO:0000255" key="1">
    <source>
        <dbReference type="HAMAP-Rule" id="MF_00131"/>
    </source>
</evidence>
<gene>
    <name evidence="1" type="primary">trpA</name>
    <name type="ordered locus">Pput_0097</name>
</gene>
<reference key="1">
    <citation type="submission" date="2007-05" db="EMBL/GenBank/DDBJ databases">
        <title>Complete sequence of Pseudomonas putida F1.</title>
        <authorList>
            <consortium name="US DOE Joint Genome Institute"/>
            <person name="Copeland A."/>
            <person name="Lucas S."/>
            <person name="Lapidus A."/>
            <person name="Barry K."/>
            <person name="Detter J.C."/>
            <person name="Glavina del Rio T."/>
            <person name="Hammon N."/>
            <person name="Israni S."/>
            <person name="Dalin E."/>
            <person name="Tice H."/>
            <person name="Pitluck S."/>
            <person name="Chain P."/>
            <person name="Malfatti S."/>
            <person name="Shin M."/>
            <person name="Vergez L."/>
            <person name="Schmutz J."/>
            <person name="Larimer F."/>
            <person name="Land M."/>
            <person name="Hauser L."/>
            <person name="Kyrpides N."/>
            <person name="Lykidis A."/>
            <person name="Parales R."/>
            <person name="Richardson P."/>
        </authorList>
    </citation>
    <scope>NUCLEOTIDE SEQUENCE [LARGE SCALE GENOMIC DNA]</scope>
    <source>
        <strain>ATCC 700007 / DSM 6899 / JCM 31910 / BCRC 17059 / LMG 24140 / F1</strain>
    </source>
</reference>
<comment type="function">
    <text evidence="1">The alpha subunit is responsible for the aldol cleavage of indoleglycerol phosphate to indole and glyceraldehyde 3-phosphate.</text>
</comment>
<comment type="catalytic activity">
    <reaction evidence="1">
        <text>(1S,2R)-1-C-(indol-3-yl)glycerol 3-phosphate + L-serine = D-glyceraldehyde 3-phosphate + L-tryptophan + H2O</text>
        <dbReference type="Rhea" id="RHEA:10532"/>
        <dbReference type="ChEBI" id="CHEBI:15377"/>
        <dbReference type="ChEBI" id="CHEBI:33384"/>
        <dbReference type="ChEBI" id="CHEBI:57912"/>
        <dbReference type="ChEBI" id="CHEBI:58866"/>
        <dbReference type="ChEBI" id="CHEBI:59776"/>
        <dbReference type="EC" id="4.2.1.20"/>
    </reaction>
</comment>
<comment type="pathway">
    <text evidence="1">Amino-acid biosynthesis; L-tryptophan biosynthesis; L-tryptophan from chorismate: step 5/5.</text>
</comment>
<comment type="subunit">
    <text evidence="1">Tetramer of two alpha and two beta chains.</text>
</comment>
<comment type="similarity">
    <text evidence="1">Belongs to the TrpA family.</text>
</comment>
<dbReference type="EC" id="4.2.1.20" evidence="1"/>
<dbReference type="EMBL" id="CP000712">
    <property type="protein sequence ID" value="ABQ76272.1"/>
    <property type="molecule type" value="Genomic_DNA"/>
</dbReference>
<dbReference type="SMR" id="A5VWL2"/>
<dbReference type="KEGG" id="ppf:Pput_0097"/>
<dbReference type="eggNOG" id="COG0159">
    <property type="taxonomic scope" value="Bacteria"/>
</dbReference>
<dbReference type="HOGENOM" id="CLU_016734_0_4_6"/>
<dbReference type="UniPathway" id="UPA00035">
    <property type="reaction ID" value="UER00044"/>
</dbReference>
<dbReference type="GO" id="GO:0005829">
    <property type="term" value="C:cytosol"/>
    <property type="evidence" value="ECO:0007669"/>
    <property type="project" value="TreeGrafter"/>
</dbReference>
<dbReference type="GO" id="GO:0004834">
    <property type="term" value="F:tryptophan synthase activity"/>
    <property type="evidence" value="ECO:0007669"/>
    <property type="project" value="UniProtKB-UniRule"/>
</dbReference>
<dbReference type="CDD" id="cd04724">
    <property type="entry name" value="Tryptophan_synthase_alpha"/>
    <property type="match status" value="1"/>
</dbReference>
<dbReference type="FunFam" id="3.20.20.70:FF:000037">
    <property type="entry name" value="Tryptophan synthase alpha chain"/>
    <property type="match status" value="1"/>
</dbReference>
<dbReference type="Gene3D" id="3.20.20.70">
    <property type="entry name" value="Aldolase class I"/>
    <property type="match status" value="1"/>
</dbReference>
<dbReference type="HAMAP" id="MF_00131">
    <property type="entry name" value="Trp_synth_alpha"/>
    <property type="match status" value="1"/>
</dbReference>
<dbReference type="InterPro" id="IPR013785">
    <property type="entry name" value="Aldolase_TIM"/>
</dbReference>
<dbReference type="InterPro" id="IPR011060">
    <property type="entry name" value="RibuloseP-bd_barrel"/>
</dbReference>
<dbReference type="InterPro" id="IPR018204">
    <property type="entry name" value="Trp_synthase_alpha_AS"/>
</dbReference>
<dbReference type="InterPro" id="IPR002028">
    <property type="entry name" value="Trp_synthase_suA"/>
</dbReference>
<dbReference type="NCBIfam" id="TIGR00262">
    <property type="entry name" value="trpA"/>
    <property type="match status" value="1"/>
</dbReference>
<dbReference type="PANTHER" id="PTHR43406:SF1">
    <property type="entry name" value="TRYPTOPHAN SYNTHASE ALPHA CHAIN, CHLOROPLASTIC"/>
    <property type="match status" value="1"/>
</dbReference>
<dbReference type="PANTHER" id="PTHR43406">
    <property type="entry name" value="TRYPTOPHAN SYNTHASE, ALPHA CHAIN"/>
    <property type="match status" value="1"/>
</dbReference>
<dbReference type="Pfam" id="PF00290">
    <property type="entry name" value="Trp_syntA"/>
    <property type="match status" value="1"/>
</dbReference>
<dbReference type="SUPFAM" id="SSF51366">
    <property type="entry name" value="Ribulose-phoshate binding barrel"/>
    <property type="match status" value="1"/>
</dbReference>
<dbReference type="PROSITE" id="PS00167">
    <property type="entry name" value="TRP_SYNTHASE_ALPHA"/>
    <property type="match status" value="1"/>
</dbReference>
<sequence>MSRLEQRFAELKAEGRSALVTFVTAGDPGYDASLQILKGLPAAGADVIELGMPFTDPMADGVAIQLATLRALEAGQTLAKTLQMVREFRVDNQTTPIVLMGYYNPIHRFGVDTFVAEAKAAGVDGLIIVDLPPEHDAELATPAQAAGIDFIRLTTPTTDDARLPRVLERSSGFVYYVSVAGVTGAGSATTEHVTEAIARLRRHTDLPISVGFGIRTPEQAANIARLADGVVVGSALVDKIAQAKSADQAVTDVLSLCSALAEGVRGARR</sequence>
<protein>
    <recommendedName>
        <fullName evidence="1">Tryptophan synthase alpha chain</fullName>
        <ecNumber evidence="1">4.2.1.20</ecNumber>
    </recommendedName>
</protein>
<proteinExistence type="inferred from homology"/>
<organism>
    <name type="scientific">Pseudomonas putida (strain ATCC 700007 / DSM 6899 / JCM 31910 / BCRC 17059 / LMG 24140 / F1)</name>
    <dbReference type="NCBI Taxonomy" id="351746"/>
    <lineage>
        <taxon>Bacteria</taxon>
        <taxon>Pseudomonadati</taxon>
        <taxon>Pseudomonadota</taxon>
        <taxon>Gammaproteobacteria</taxon>
        <taxon>Pseudomonadales</taxon>
        <taxon>Pseudomonadaceae</taxon>
        <taxon>Pseudomonas</taxon>
    </lineage>
</organism>
<name>TRPA_PSEP1</name>
<accession>A5VWL2</accession>